<evidence type="ECO:0000250" key="1">
    <source>
        <dbReference type="UniProtKB" id="A2PZA5"/>
    </source>
</evidence>
<evidence type="ECO:0000250" key="2">
    <source>
        <dbReference type="UniProtKB" id="Q12051"/>
    </source>
</evidence>
<evidence type="ECO:0000250" key="3">
    <source>
        <dbReference type="UniProtKB" id="Q40577"/>
    </source>
</evidence>
<evidence type="ECO:0000256" key="4">
    <source>
        <dbReference type="SAM" id="MobiDB-lite"/>
    </source>
</evidence>
<evidence type="ECO:0000269" key="5">
    <source>
    </source>
</evidence>
<evidence type="ECO:0000269" key="6">
    <source>
    </source>
</evidence>
<evidence type="ECO:0000269" key="7">
    <source>
    </source>
</evidence>
<evidence type="ECO:0000303" key="8">
    <source>
    </source>
</evidence>
<evidence type="ECO:0000303" key="9">
    <source>
    </source>
</evidence>
<evidence type="ECO:0000305" key="10"/>
<evidence type="ECO:0000305" key="11">
    <source>
    </source>
</evidence>
<evidence type="ECO:0000305" key="12">
    <source>
    </source>
</evidence>
<organism>
    <name type="scientific">Aspergillus clavatus (strain ATCC 1007 / CBS 513.65 / DSM 816 / NCTC 3887 / NRRL 1 / QM 1276 / 107)</name>
    <dbReference type="NCBI Taxonomy" id="344612"/>
    <lineage>
        <taxon>Eukaryota</taxon>
        <taxon>Fungi</taxon>
        <taxon>Dikarya</taxon>
        <taxon>Ascomycota</taxon>
        <taxon>Pezizomycotina</taxon>
        <taxon>Eurotiomycetes</taxon>
        <taxon>Eurotiomycetidae</taxon>
        <taxon>Eurotiales</taxon>
        <taxon>Aspergillaceae</taxon>
        <taxon>Aspergillus</taxon>
        <taxon>Aspergillus subgen. Fumigati</taxon>
    </lineage>
</organism>
<name>OBLA_ASPCL</name>
<reference key="1">
    <citation type="journal article" date="2008" name="PLoS Genet.">
        <title>Genomic islands in the pathogenic filamentous fungus Aspergillus fumigatus.</title>
        <authorList>
            <person name="Fedorova N.D."/>
            <person name="Khaldi N."/>
            <person name="Joardar V.S."/>
            <person name="Maiti R."/>
            <person name="Amedeo P."/>
            <person name="Anderson M.J."/>
            <person name="Crabtree J."/>
            <person name="Silva J.C."/>
            <person name="Badger J.H."/>
            <person name="Albarraq A."/>
            <person name="Angiuoli S."/>
            <person name="Bussey H."/>
            <person name="Bowyer P."/>
            <person name="Cotty P.J."/>
            <person name="Dyer P.S."/>
            <person name="Egan A."/>
            <person name="Galens K."/>
            <person name="Fraser-Liggett C.M."/>
            <person name="Haas B.J."/>
            <person name="Inman J.M."/>
            <person name="Kent R."/>
            <person name="Lemieux S."/>
            <person name="Malavazi I."/>
            <person name="Orvis J."/>
            <person name="Roemer T."/>
            <person name="Ronning C.M."/>
            <person name="Sundaram J.P."/>
            <person name="Sutton G."/>
            <person name="Turner G."/>
            <person name="Venter J.C."/>
            <person name="White O.R."/>
            <person name="Whitty B.R."/>
            <person name="Youngman P."/>
            <person name="Wolfe K.H."/>
            <person name="Goldman G.H."/>
            <person name="Wortman J.R."/>
            <person name="Jiang B."/>
            <person name="Denning D.W."/>
            <person name="Nierman W.C."/>
        </authorList>
    </citation>
    <scope>NUCLEOTIDE SEQUENCE [LARGE SCALE GENOMIC DNA]</scope>
    <source>
        <strain>ATCC 1007 / CBS 513.65 / DSM 816 / NCTC 3887 / NRRL 1 / QM 1276 / 107</strain>
    </source>
</reference>
<reference key="2">
    <citation type="journal article" date="2013" name="Org. Lett.">
        <title>Identification of ophiobolin F synthase by a genome mining approach: a sesterterpene synthase from Aspergillus clavatus.</title>
        <authorList>
            <person name="Chiba R."/>
            <person name="Minami A."/>
            <person name="Gomi K."/>
            <person name="Oikawa H."/>
        </authorList>
    </citation>
    <scope>CATALYTIC ACTIVITY</scope>
    <scope>FUNCTION</scope>
</reference>
<reference key="3">
    <citation type="journal article" date="2016" name="Org. Lett.">
        <title>Multiple oxidative modifications in the ophiobolin biosynthesis: P450 oxidations found in genome mining.</title>
        <authorList>
            <person name="Narita K."/>
            <person name="Chiba R."/>
            <person name="Minami A."/>
            <person name="Kodama M."/>
            <person name="Fujii I."/>
            <person name="Gomi K."/>
            <person name="Oikawa H."/>
        </authorList>
    </citation>
    <scope>FUNCTION</scope>
    <scope>PATHWAY</scope>
</reference>
<reference key="4">
    <citation type="journal article" date="2017" name="Biochemistry">
        <title>Exploring the influence of domain architecture on the catalytic function of diterpene synthases.</title>
        <authorList>
            <person name="Pemberton T.A."/>
            <person name="Chen M."/>
            <person name="Harris G.G."/>
            <person name="Chou W.K."/>
            <person name="Duan L."/>
            <person name="Koeksal M."/>
            <person name="Genshaft A.S."/>
            <person name="Cane D.E."/>
            <person name="Christianson D.W."/>
        </authorList>
    </citation>
    <scope>FUNCTION</scope>
    <scope>DOMAIN</scope>
    <scope>CATALYTIC ACTIVITY</scope>
    <scope>BIOPHYSICOCHEMICAL PROPERTIES</scope>
</reference>
<sequence>MACKYSTLIDSSLYDREGLCPGIDLRRHVAGELEEVGAFRAQEDWRRLVGPLPKPYAGLLGPDFSFITGAVPECHPDRMEIVAYALEFGFMHDDVIDTDVNHASLDEVGHTLDQSRTGKIEDKGSDGKRQMVTQIIREMMAIDPERAMTVAKSWASGVRHSSRRKEDTNFKALEQYIPYRALDVGYMLWHGLVTFGCAITIPNEEEEEAKRLIIPALVQASLLNDLFSFEKEKNDANVQNAVLIVMNEHGCSEEEARDILKKRIRLECANYLRNVKETNARADVSDELKRYINVMQYTLSGNAAWSTNCPRYNGPTKFNELQLLRSEHGLAKYPSRWSQENRTSGLVEGDCHESKPNELKRKRNGVSVDDEMRTNGTNGAKKPAHVSQPSTDSIVLEDMVQLARTCDLPDLSDTVILQPYRYLTSLPSKGFRDQAIDSINKWLKVPPKSVKMIKDVVKMLHSASLMLDDLEDNSPLRRGKPSTHSIYGMAQTVNSATYQYITATDITAQLQNSETFHIFVEELQQLHVGQSYDLYWTHNTLCPTIAEYLKMVDMKTGGLFRMLTRMMIAESPVVDKVPNSDMNLFSCLIGRFFQIRDDYQNLASADYAKAKGFAEDLDEGKYSFTLIHCIQTLESKPELAGEMMQLRAFLMKRRHEGKLSQEAKQEVLVTMKKTESLQYTLSVLRELHSELEKEVENLEAKFGEENFTLRVMLELLKV</sequence>
<feature type="chain" id="PRO_0000430745" description="Ophiobolin F synthase oblA">
    <location>
        <begin position="1"/>
        <end position="718"/>
    </location>
</feature>
<feature type="region of interest" description="(7Z)-ophiobola-7,19-dien-3-ol synthase" evidence="7">
    <location>
        <begin position="1"/>
        <end position="320"/>
    </location>
</feature>
<feature type="region of interest" description="Geranylfarnesyl diphosphate synthase" evidence="7">
    <location>
        <begin position="321"/>
        <end position="718"/>
    </location>
</feature>
<feature type="region of interest" description="Disordered" evidence="4">
    <location>
        <begin position="346"/>
        <end position="391"/>
    </location>
</feature>
<feature type="short sequence motif" description="DDXXD 1" evidence="12">
    <location>
        <begin position="93"/>
        <end position="97"/>
    </location>
</feature>
<feature type="short sequence motif" description="NSE/DTE" evidence="12">
    <location>
        <begin position="224"/>
        <end position="232"/>
    </location>
</feature>
<feature type="short sequence motif" description="DDXXD 2" evidence="12">
    <location>
        <begin position="468"/>
        <end position="472"/>
    </location>
</feature>
<feature type="compositionally biased region" description="Basic and acidic residues" evidence="4">
    <location>
        <begin position="349"/>
        <end position="359"/>
    </location>
</feature>
<feature type="binding site" evidence="3">
    <location>
        <position position="93"/>
    </location>
    <ligand>
        <name>Mg(2+)</name>
        <dbReference type="ChEBI" id="CHEBI:18420"/>
        <label>1</label>
    </ligand>
</feature>
<feature type="binding site" evidence="3">
    <location>
        <position position="93"/>
    </location>
    <ligand>
        <name>Mg(2+)</name>
        <dbReference type="ChEBI" id="CHEBI:18420"/>
        <label>2</label>
    </ligand>
</feature>
<feature type="binding site" evidence="1">
    <location>
        <position position="93"/>
    </location>
    <ligand>
        <name>substrate</name>
    </ligand>
</feature>
<feature type="binding site" evidence="3">
    <location>
        <position position="97"/>
    </location>
    <ligand>
        <name>Mg(2+)</name>
        <dbReference type="ChEBI" id="CHEBI:18420"/>
        <label>1</label>
    </ligand>
</feature>
<feature type="binding site" evidence="3">
    <location>
        <position position="97"/>
    </location>
    <ligand>
        <name>Mg(2+)</name>
        <dbReference type="ChEBI" id="CHEBI:18420"/>
        <label>2</label>
    </ligand>
</feature>
<feature type="binding site" evidence="1">
    <location>
        <begin position="180"/>
        <end position="183"/>
    </location>
    <ligand>
        <name>substrate</name>
    </ligand>
</feature>
<feature type="binding site" evidence="1">
    <location>
        <position position="224"/>
    </location>
    <ligand>
        <name>substrate</name>
    </ligand>
</feature>
<feature type="binding site" evidence="1">
    <location>
        <begin position="228"/>
        <end position="232"/>
    </location>
    <ligand>
        <name>substrate</name>
    </ligand>
</feature>
<feature type="binding site" evidence="1">
    <location>
        <begin position="311"/>
        <end position="312"/>
    </location>
    <ligand>
        <name>substrate</name>
    </ligand>
</feature>
<feature type="binding site" evidence="2">
    <location>
        <position position="429"/>
    </location>
    <ligand>
        <name>isopentenyl diphosphate</name>
        <dbReference type="ChEBI" id="CHEBI:128769"/>
    </ligand>
</feature>
<feature type="binding site" evidence="2">
    <location>
        <position position="432"/>
    </location>
    <ligand>
        <name>isopentenyl diphosphate</name>
        <dbReference type="ChEBI" id="CHEBI:128769"/>
    </ligand>
</feature>
<feature type="binding site" evidence="2">
    <location>
        <position position="461"/>
    </location>
    <ligand>
        <name>isopentenyl diphosphate</name>
        <dbReference type="ChEBI" id="CHEBI:128769"/>
    </ligand>
</feature>
<feature type="binding site" evidence="2">
    <location>
        <position position="468"/>
    </location>
    <ligand>
        <name>Mg(2+)</name>
        <dbReference type="ChEBI" id="CHEBI:18420"/>
        <label>3</label>
    </ligand>
</feature>
<feature type="binding site" evidence="2">
    <location>
        <position position="468"/>
    </location>
    <ligand>
        <name>Mg(2+)</name>
        <dbReference type="ChEBI" id="CHEBI:18420"/>
        <label>4</label>
    </ligand>
</feature>
<feature type="binding site" evidence="2">
    <location>
        <position position="472"/>
    </location>
    <ligand>
        <name>Mg(2+)</name>
        <dbReference type="ChEBI" id="CHEBI:18420"/>
        <label>3</label>
    </ligand>
</feature>
<feature type="binding site" evidence="2">
    <location>
        <position position="472"/>
    </location>
    <ligand>
        <name>Mg(2+)</name>
        <dbReference type="ChEBI" id="CHEBI:18420"/>
        <label>4</label>
    </ligand>
</feature>
<feature type="binding site" evidence="2">
    <location>
        <position position="477"/>
    </location>
    <ligand>
        <name>dimethylallyl diphosphate</name>
        <dbReference type="ChEBI" id="CHEBI:57623"/>
    </ligand>
</feature>
<feature type="binding site" evidence="2">
    <location>
        <position position="478"/>
    </location>
    <ligand>
        <name>isopentenyl diphosphate</name>
        <dbReference type="ChEBI" id="CHEBI:128769"/>
    </ligand>
</feature>
<feature type="binding site" evidence="2">
    <location>
        <position position="555"/>
    </location>
    <ligand>
        <name>dimethylallyl diphosphate</name>
        <dbReference type="ChEBI" id="CHEBI:57623"/>
    </ligand>
</feature>
<feature type="binding site" evidence="2">
    <location>
        <position position="556"/>
    </location>
    <ligand>
        <name>dimethylallyl diphosphate</name>
        <dbReference type="ChEBI" id="CHEBI:57623"/>
    </ligand>
</feature>
<feature type="binding site" evidence="2">
    <location>
        <position position="594"/>
    </location>
    <ligand>
        <name>dimethylallyl diphosphate</name>
        <dbReference type="ChEBI" id="CHEBI:57623"/>
    </ligand>
</feature>
<feature type="binding site" evidence="2">
    <location>
        <position position="601"/>
    </location>
    <ligand>
        <name>dimethylallyl diphosphate</name>
        <dbReference type="ChEBI" id="CHEBI:57623"/>
    </ligand>
</feature>
<feature type="binding site" evidence="2">
    <location>
        <position position="611"/>
    </location>
    <ligand>
        <name>dimethylallyl diphosphate</name>
        <dbReference type="ChEBI" id="CHEBI:57623"/>
    </ligand>
</feature>
<feature type="binding site" evidence="2">
    <location>
        <position position="621"/>
    </location>
    <ligand>
        <name>dimethylallyl diphosphate</name>
        <dbReference type="ChEBI" id="CHEBI:57623"/>
    </ligand>
</feature>
<protein>
    <recommendedName>
        <fullName evidence="8">Ophiobolin F synthase oblA</fullName>
        <shortName evidence="8">acOS</shortName>
    </recommendedName>
    <alternativeName>
        <fullName evidence="8">Bifunctional sesterterpene synthase oblA</fullName>
    </alternativeName>
    <alternativeName>
        <fullName evidence="9">Ophiobolin biosynthesis cluster protein A</fullName>
    </alternativeName>
    <domain>
        <recommendedName>
            <fullName evidence="8">Ophiobolin F cyclase</fullName>
            <ecNumber evidence="5 7">4.2.3.145</ecNumber>
        </recommendedName>
    </domain>
    <domain>
        <recommendedName>
            <fullName evidence="8">Geranylgeranyl diphosphate synthase</fullName>
            <shortName evidence="8">GGDP synthase</shortName>
            <shortName evidence="8">GGS</shortName>
            <ecNumber evidence="5 7">2.5.1.29</ecNumber>
        </recommendedName>
    </domain>
    <domain>
        <recommendedName>
            <fullName evidence="8">Geranylfarnesyl diphosphate synthase</fullName>
            <shortName evidence="8">GFDP synthase</shortName>
            <ecNumber evidence="5 7">2.5.1.81</ecNumber>
        </recommendedName>
    </domain>
</protein>
<comment type="function">
    <text evidence="5 6 7 11">Bifunctional sesterterpene synthase; part of the gene cluster that mediates the biosynthesis of the sesterterpenes ophiobolins, fungal phytotoxins with potential anti-cancer activities (PubMed:23324037, PubMed:27116000, PubMed:28362483). The first step of the pathway is performed by the sesterterpene synthase oblA that possesses both prenyl transferase and terpene cyclase activity, converting isopentenyl diphosphate and dimethylallyl diphosphate into geranylfarnesyl diphosphate (GFPP) and further converting GFPP into ophiobolin F, respectively (PubMed:23324037). Other sesterterpenoids (C(25) terpenoids) are found as minor products of oblA (PubMed:23324037). It is expected that ophiobolin F is then oxidized to ophiobolin A via ophiobolin C and ophiobolin B intermediates by the combined action of the cytochrome P450 monooxygenase oblB and the FAD-dependent oxidoreductase oblC (Probable). Although oblB catalyzes multistep oxygenations at C5 and C21/C7 in a relatively efficient manner, it is unable to convert ophiobolin F to ophiobolin C and produces instead several unexpected derivatives (PubMed:27116000).</text>
</comment>
<comment type="catalytic activity">
    <reaction evidence="5 7">
        <text>isopentenyl diphosphate + (2E,6E)-farnesyl diphosphate = (2E,6E,10E)-geranylgeranyl diphosphate + diphosphate</text>
        <dbReference type="Rhea" id="RHEA:17653"/>
        <dbReference type="ChEBI" id="CHEBI:33019"/>
        <dbReference type="ChEBI" id="CHEBI:58756"/>
        <dbReference type="ChEBI" id="CHEBI:128769"/>
        <dbReference type="ChEBI" id="CHEBI:175763"/>
        <dbReference type="EC" id="2.5.1.29"/>
    </reaction>
    <physiologicalReaction direction="left-to-right" evidence="5 7">
        <dbReference type="Rhea" id="RHEA:17654"/>
    </physiologicalReaction>
</comment>
<comment type="catalytic activity">
    <reaction evidence="5 7">
        <text>isopentenyl diphosphate + (2E,6E,10E)-geranylgeranyl diphosphate = (2E,6E,10E,14E)-geranylfarnesyl diphosphate + diphosphate</text>
        <dbReference type="Rhea" id="RHEA:25694"/>
        <dbReference type="ChEBI" id="CHEBI:33019"/>
        <dbReference type="ChEBI" id="CHEBI:57907"/>
        <dbReference type="ChEBI" id="CHEBI:58756"/>
        <dbReference type="ChEBI" id="CHEBI:128769"/>
        <dbReference type="EC" id="2.5.1.81"/>
    </reaction>
    <physiologicalReaction direction="left-to-right" evidence="5 7">
        <dbReference type="Rhea" id="RHEA:25695"/>
    </physiologicalReaction>
</comment>
<comment type="catalytic activity">
    <reaction evidence="5 7">
        <text>(2E,6E,10E,14E)-geranylfarnesyl diphosphate + H2O = ophiobolin F + diphosphate</text>
        <dbReference type="Rhea" id="RHEA:41552"/>
        <dbReference type="ChEBI" id="CHEBI:15377"/>
        <dbReference type="ChEBI" id="CHEBI:33019"/>
        <dbReference type="ChEBI" id="CHEBI:57907"/>
        <dbReference type="ChEBI" id="CHEBI:78293"/>
        <dbReference type="EC" id="4.2.3.145"/>
    </reaction>
    <physiologicalReaction direction="left-to-right" evidence="5 7">
        <dbReference type="Rhea" id="RHEA:41553"/>
    </physiologicalReaction>
</comment>
<comment type="cofactor">
    <cofactor evidence="2 3">
        <name>Mg(2+)</name>
        <dbReference type="ChEBI" id="CHEBI:18420"/>
    </cofactor>
    <text evidence="2 3">Binds 4 Mg(2+) ions per subunit.</text>
</comment>
<comment type="biophysicochemical properties">
    <kinetics>
        <KM evidence="7">0.024 uM for geranylgeranyl diphosphate (GGDP)</KM>
    </kinetics>
</comment>
<comment type="pathway">
    <text evidence="5">Secondary metabolite biosynthesis; terpenoid biosynthesis.</text>
</comment>
<comment type="domain">
    <text evidence="12">The conserved DDXXD motifs as well as the NSE/DTE motif are important for the catalytic activity, presumably through binding to Mg(2+).</text>
</comment>
<comment type="similarity">
    <text evidence="10">In the N-terminal section; belongs to the terpene synthase family.</text>
</comment>
<comment type="similarity">
    <text evidence="10">In the C-terminal section; belongs to the FPP/GGPP synthase family.</text>
</comment>
<accession>A1C8C3</accession>
<dbReference type="EC" id="4.2.3.145" evidence="5 7"/>
<dbReference type="EC" id="2.5.1.29" evidence="5 7"/>
<dbReference type="EC" id="2.5.1.81" evidence="5 7"/>
<dbReference type="EMBL" id="DS027045">
    <property type="protein sequence ID" value="EAW14644.1"/>
    <property type="molecule type" value="Genomic_DNA"/>
</dbReference>
<dbReference type="RefSeq" id="XP_001276070.1">
    <property type="nucleotide sequence ID" value="XM_001276069.1"/>
</dbReference>
<dbReference type="SMR" id="A1C8C3"/>
<dbReference type="STRING" id="344612.A1C8C3"/>
<dbReference type="EnsemblFungi" id="EAW14644">
    <property type="protein sequence ID" value="EAW14644"/>
    <property type="gene ID" value="ACLA_076850"/>
</dbReference>
<dbReference type="GeneID" id="4708281"/>
<dbReference type="KEGG" id="act:ACLA_076850"/>
<dbReference type="VEuPathDB" id="FungiDB:ACLA_076850"/>
<dbReference type="eggNOG" id="KOG0777">
    <property type="taxonomic scope" value="Eukaryota"/>
</dbReference>
<dbReference type="HOGENOM" id="CLU_014015_10_0_1"/>
<dbReference type="OMA" id="DLYWTHN"/>
<dbReference type="OrthoDB" id="6921389at2759"/>
<dbReference type="BioCyc" id="MetaCyc:MONOMER-19519"/>
<dbReference type="SABIO-RK" id="A1C8C3"/>
<dbReference type="UniPathway" id="UPA00213"/>
<dbReference type="Proteomes" id="UP000006701">
    <property type="component" value="Unassembled WGS sequence"/>
</dbReference>
<dbReference type="GO" id="GO:0044687">
    <property type="term" value="F:geranylfarnesyl diphosphate synthase activity"/>
    <property type="evidence" value="ECO:0007669"/>
    <property type="project" value="UniProtKB-EC"/>
</dbReference>
<dbReference type="GO" id="GO:0004311">
    <property type="term" value="F:geranylgeranyl diphosphate synthase activity"/>
    <property type="evidence" value="ECO:0007669"/>
    <property type="project" value="UniProtKB-EC"/>
</dbReference>
<dbReference type="GO" id="GO:0016829">
    <property type="term" value="F:lyase activity"/>
    <property type="evidence" value="ECO:0007669"/>
    <property type="project" value="UniProtKB-KW"/>
</dbReference>
<dbReference type="GO" id="GO:0046872">
    <property type="term" value="F:metal ion binding"/>
    <property type="evidence" value="ECO:0007669"/>
    <property type="project" value="UniProtKB-KW"/>
</dbReference>
<dbReference type="GO" id="GO:0046165">
    <property type="term" value="P:alcohol biosynthetic process"/>
    <property type="evidence" value="ECO:0007669"/>
    <property type="project" value="UniProtKB-ARBA"/>
</dbReference>
<dbReference type="GO" id="GO:0043386">
    <property type="term" value="P:mycotoxin biosynthetic process"/>
    <property type="evidence" value="ECO:0007669"/>
    <property type="project" value="UniProtKB-ARBA"/>
</dbReference>
<dbReference type="GO" id="GO:0016114">
    <property type="term" value="P:terpenoid biosynthetic process"/>
    <property type="evidence" value="ECO:0007669"/>
    <property type="project" value="UniProtKB-UniPathway"/>
</dbReference>
<dbReference type="Gene3D" id="1.10.600.10">
    <property type="entry name" value="Farnesyl Diphosphate Synthase"/>
    <property type="match status" value="2"/>
</dbReference>
<dbReference type="InterPro" id="IPR008949">
    <property type="entry name" value="Isoprenoid_synthase_dom_sf"/>
</dbReference>
<dbReference type="InterPro" id="IPR000092">
    <property type="entry name" value="Polyprenyl_synt"/>
</dbReference>
<dbReference type="InterPro" id="IPR033749">
    <property type="entry name" value="Polyprenyl_synt_CS"/>
</dbReference>
<dbReference type="PANTHER" id="PTHR12001">
    <property type="entry name" value="GERANYLGERANYL PYROPHOSPHATE SYNTHASE"/>
    <property type="match status" value="1"/>
</dbReference>
<dbReference type="PANTHER" id="PTHR12001:SF72">
    <property type="entry name" value="THIJ_PFPI FAMILY PROTEIN (AFU_ORTHOLOGUE AFUA_3G01210)-RELATED"/>
    <property type="match status" value="1"/>
</dbReference>
<dbReference type="Pfam" id="PF00348">
    <property type="entry name" value="polyprenyl_synt"/>
    <property type="match status" value="1"/>
</dbReference>
<dbReference type="Pfam" id="PF19086">
    <property type="entry name" value="Terpene_syn_C_2"/>
    <property type="match status" value="1"/>
</dbReference>
<dbReference type="SFLD" id="SFLDS00005">
    <property type="entry name" value="Isoprenoid_Synthase_Type_I"/>
    <property type="match status" value="1"/>
</dbReference>
<dbReference type="SUPFAM" id="SSF48576">
    <property type="entry name" value="Terpenoid synthases"/>
    <property type="match status" value="2"/>
</dbReference>
<dbReference type="PROSITE" id="PS00723">
    <property type="entry name" value="POLYPRENYL_SYNTHASE_1"/>
    <property type="match status" value="1"/>
</dbReference>
<dbReference type="PROSITE" id="PS00444">
    <property type="entry name" value="POLYPRENYL_SYNTHASE_2"/>
    <property type="match status" value="1"/>
</dbReference>
<proteinExistence type="evidence at protein level"/>
<gene>
    <name evidence="9" type="primary">oblA</name>
    <name type="ORF">ACLA_076850</name>
</gene>
<keyword id="KW-0414">Isoprene biosynthesis</keyword>
<keyword id="KW-0456">Lyase</keyword>
<keyword id="KW-0460">Magnesium</keyword>
<keyword id="KW-0479">Metal-binding</keyword>
<keyword id="KW-0511">Multifunctional enzyme</keyword>
<keyword id="KW-1185">Reference proteome</keyword>
<keyword id="KW-0808">Transferase</keyword>